<evidence type="ECO:0000305" key="1"/>
<name>RL32_AERPE</name>
<comment type="similarity">
    <text evidence="1">Belongs to the eukaryotic ribosomal protein eL32 family.</text>
</comment>
<gene>
    <name type="primary">rpl32e</name>
    <name type="ordered locus">APE_0349</name>
</gene>
<proteinExistence type="inferred from homology"/>
<accession>Q9YF92</accession>
<organism>
    <name type="scientific">Aeropyrum pernix (strain ATCC 700893 / DSM 11879 / JCM 9820 / NBRC 100138 / K1)</name>
    <dbReference type="NCBI Taxonomy" id="272557"/>
    <lineage>
        <taxon>Archaea</taxon>
        <taxon>Thermoproteota</taxon>
        <taxon>Thermoprotei</taxon>
        <taxon>Desulfurococcales</taxon>
        <taxon>Desulfurococcaceae</taxon>
        <taxon>Aeropyrum</taxon>
    </lineage>
</organism>
<dbReference type="EMBL" id="BA000002">
    <property type="protein sequence ID" value="BAA79304.1"/>
    <property type="molecule type" value="Genomic_DNA"/>
</dbReference>
<dbReference type="PIR" id="D72726">
    <property type="entry name" value="D72726"/>
</dbReference>
<dbReference type="RefSeq" id="WP_010865683.1">
    <property type="nucleotide sequence ID" value="NC_000854.2"/>
</dbReference>
<dbReference type="SMR" id="Q9YF92"/>
<dbReference type="STRING" id="272557.APE_0349"/>
<dbReference type="EnsemblBacteria" id="BAA79304">
    <property type="protein sequence ID" value="BAA79304"/>
    <property type="gene ID" value="APE_0349"/>
</dbReference>
<dbReference type="GeneID" id="1444567"/>
<dbReference type="KEGG" id="ape:APE_0349"/>
<dbReference type="PATRIC" id="fig|272557.25.peg.269"/>
<dbReference type="eggNOG" id="arCOG00781">
    <property type="taxonomic scope" value="Archaea"/>
</dbReference>
<dbReference type="Proteomes" id="UP000002518">
    <property type="component" value="Chromosome"/>
</dbReference>
<dbReference type="GO" id="GO:0022625">
    <property type="term" value="C:cytosolic large ribosomal subunit"/>
    <property type="evidence" value="ECO:0007669"/>
    <property type="project" value="TreeGrafter"/>
</dbReference>
<dbReference type="GO" id="GO:0003735">
    <property type="term" value="F:structural constituent of ribosome"/>
    <property type="evidence" value="ECO:0007669"/>
    <property type="project" value="InterPro"/>
</dbReference>
<dbReference type="GO" id="GO:0006412">
    <property type="term" value="P:translation"/>
    <property type="evidence" value="ECO:0007669"/>
    <property type="project" value="UniProtKB-UniRule"/>
</dbReference>
<dbReference type="CDD" id="cd00513">
    <property type="entry name" value="Ribosomal_L32_L32e"/>
    <property type="match status" value="1"/>
</dbReference>
<dbReference type="HAMAP" id="MF_00810">
    <property type="entry name" value="Ribosomal_eL32"/>
    <property type="match status" value="1"/>
</dbReference>
<dbReference type="InterPro" id="IPR001515">
    <property type="entry name" value="Ribosomal_eL32"/>
</dbReference>
<dbReference type="InterPro" id="IPR023654">
    <property type="entry name" value="Ribosomal_eL32_arc"/>
</dbReference>
<dbReference type="InterPro" id="IPR018263">
    <property type="entry name" value="Ribosomal_eL32_CS"/>
</dbReference>
<dbReference type="InterPro" id="IPR036351">
    <property type="entry name" value="Ribosomal_eL32_sf"/>
</dbReference>
<dbReference type="NCBIfam" id="NF006332">
    <property type="entry name" value="PRK08562.1"/>
    <property type="match status" value="1"/>
</dbReference>
<dbReference type="PANTHER" id="PTHR23413">
    <property type="entry name" value="60S RIBOSOMAL PROTEIN L32 AND DNA-DIRECTED RNA POLYMERASE II, SUBUNIT N"/>
    <property type="match status" value="1"/>
</dbReference>
<dbReference type="PANTHER" id="PTHR23413:SF1">
    <property type="entry name" value="RIBOSOMAL PROTEIN L32"/>
    <property type="match status" value="1"/>
</dbReference>
<dbReference type="Pfam" id="PF01655">
    <property type="entry name" value="Ribosomal_L32e"/>
    <property type="match status" value="1"/>
</dbReference>
<dbReference type="SMART" id="SM01393">
    <property type="entry name" value="Ribosomal_L32e"/>
    <property type="match status" value="1"/>
</dbReference>
<dbReference type="SUPFAM" id="SSF52042">
    <property type="entry name" value="Ribosomal protein L32e"/>
    <property type="match status" value="1"/>
</dbReference>
<dbReference type="PROSITE" id="PS00580">
    <property type="entry name" value="RIBOSOMAL_L32E"/>
    <property type="match status" value="1"/>
</dbReference>
<feature type="chain" id="PRO_0000131146" description="Large ribosomal subunit protein eL32">
    <location>
        <begin position="1"/>
        <end position="145"/>
    </location>
</feature>
<reference key="1">
    <citation type="journal article" date="1999" name="DNA Res.">
        <title>Complete genome sequence of an aerobic hyper-thermophilic crenarchaeon, Aeropyrum pernix K1.</title>
        <authorList>
            <person name="Kawarabayasi Y."/>
            <person name="Hino Y."/>
            <person name="Horikawa H."/>
            <person name="Yamazaki S."/>
            <person name="Haikawa Y."/>
            <person name="Jin-no K."/>
            <person name="Takahashi M."/>
            <person name="Sekine M."/>
            <person name="Baba S."/>
            <person name="Ankai A."/>
            <person name="Kosugi H."/>
            <person name="Hosoyama A."/>
            <person name="Fukui S."/>
            <person name="Nagai Y."/>
            <person name="Nishijima K."/>
            <person name="Nakazawa H."/>
            <person name="Takamiya M."/>
            <person name="Masuda S."/>
            <person name="Funahashi T."/>
            <person name="Tanaka T."/>
            <person name="Kudoh Y."/>
            <person name="Yamazaki J."/>
            <person name="Kushida N."/>
            <person name="Oguchi A."/>
            <person name="Aoki K."/>
            <person name="Kubota K."/>
            <person name="Nakamura Y."/>
            <person name="Nomura N."/>
            <person name="Sako Y."/>
            <person name="Kikuchi H."/>
        </authorList>
    </citation>
    <scope>NUCLEOTIDE SEQUENCE [LARGE SCALE GENOMIC DNA]</scope>
    <source>
        <strain>ATCC 700893 / DSM 11879 / JCM 9820 / NBRC 100138 / K1</strain>
    </source>
</reference>
<sequence length="145" mass="17009">MAGGEPQSLEEAFAARRNVLAARRARERLRRLIASKSRHRFLRYLSWRFWKFERRDYWRKPKGNDNKMRLQLKGYPPIVKVGYRTPKAIRGMHPSGLEPVIVSSAKDLERLSPERHIVYIASGVGLRKKQEIRRAALERGFRVAN</sequence>
<protein>
    <recommendedName>
        <fullName evidence="1">Large ribosomal subunit protein eL32</fullName>
    </recommendedName>
    <alternativeName>
        <fullName>50S ribosomal protein L32e</fullName>
    </alternativeName>
</protein>
<keyword id="KW-1185">Reference proteome</keyword>
<keyword id="KW-0687">Ribonucleoprotein</keyword>
<keyword id="KW-0689">Ribosomal protein</keyword>